<sequence>MAKKPVMLMILDGFGISDKVDGNAVKAASKPNFDKYFNNYPHTHLGASGLSVGLPDGQMGNSEVGHLNIGAGRIVYQSLTKITKAIEDGDFFKNAALNKAVNNVLENDSTLHLMGLLSPGGVHSHTNHLKGLLQLAKKKNVKKVFVHAFLDGRDVPPSSAKEFIKDIEDYMNEIGLGEIATVSGRYYAMDRDNRWEREELAYNAMVLGKGEEAESAIKAVDASYHDNKTDEFVLPTVIVKEGKPVATIKDKDSVIFFNFRPDRARQITRAIAEEAFDGFKRDRLNIEFVTMTEYDASFKGVDVAFGPENITNTLGEYVSNKGLNQLRIAETEKYAHVTFFFNGGVEEPNKNEDRALISSPKVATYDLKPEMSAYEVTDELLKRLDEDKYDMVILNFANPDMVGHTGILEAAKKAVETVDECLGKIVDKVLKLDGSVFITADHGNSEQMIDYSNGKPMTAHTVNPVPFVYVSNHTEAKKLNEGVLADIAPTMLQEMGLEKPEEMTGKSLFE</sequence>
<dbReference type="EC" id="5.4.2.12" evidence="1"/>
<dbReference type="EMBL" id="AE001437">
    <property type="protein sequence ID" value="AAK78689.1"/>
    <property type="molecule type" value="Genomic_DNA"/>
</dbReference>
<dbReference type="EMBL" id="AF043386">
    <property type="protein sequence ID" value="AAC13163.1"/>
    <property type="molecule type" value="Genomic_DNA"/>
</dbReference>
<dbReference type="PIR" id="F96987">
    <property type="entry name" value="F96987"/>
</dbReference>
<dbReference type="RefSeq" id="NP_347349.1">
    <property type="nucleotide sequence ID" value="NC_003030.1"/>
</dbReference>
<dbReference type="RefSeq" id="WP_010964031.1">
    <property type="nucleotide sequence ID" value="NC_003030.1"/>
</dbReference>
<dbReference type="SMR" id="Q97L53"/>
<dbReference type="STRING" id="272562.CA_C0712"/>
<dbReference type="GeneID" id="44997223"/>
<dbReference type="KEGG" id="cac:CA_C0712"/>
<dbReference type="PATRIC" id="fig|272562.8.peg.915"/>
<dbReference type="eggNOG" id="COG0696">
    <property type="taxonomic scope" value="Bacteria"/>
</dbReference>
<dbReference type="HOGENOM" id="CLU_026099_2_0_9"/>
<dbReference type="OrthoDB" id="9800863at2"/>
<dbReference type="UniPathway" id="UPA00109">
    <property type="reaction ID" value="UER00186"/>
</dbReference>
<dbReference type="Proteomes" id="UP000000814">
    <property type="component" value="Chromosome"/>
</dbReference>
<dbReference type="GO" id="GO:0005829">
    <property type="term" value="C:cytosol"/>
    <property type="evidence" value="ECO:0007669"/>
    <property type="project" value="TreeGrafter"/>
</dbReference>
<dbReference type="GO" id="GO:0030145">
    <property type="term" value="F:manganese ion binding"/>
    <property type="evidence" value="ECO:0007669"/>
    <property type="project" value="UniProtKB-UniRule"/>
</dbReference>
<dbReference type="GO" id="GO:0004619">
    <property type="term" value="F:phosphoglycerate mutase activity"/>
    <property type="evidence" value="ECO:0007669"/>
    <property type="project" value="UniProtKB-EC"/>
</dbReference>
<dbReference type="GO" id="GO:0006007">
    <property type="term" value="P:glucose catabolic process"/>
    <property type="evidence" value="ECO:0007669"/>
    <property type="project" value="InterPro"/>
</dbReference>
<dbReference type="GO" id="GO:0006096">
    <property type="term" value="P:glycolytic process"/>
    <property type="evidence" value="ECO:0007669"/>
    <property type="project" value="UniProtKB-UniRule"/>
</dbReference>
<dbReference type="CDD" id="cd16010">
    <property type="entry name" value="iPGM"/>
    <property type="match status" value="1"/>
</dbReference>
<dbReference type="FunFam" id="3.40.1450.10:FF:000001">
    <property type="entry name" value="2,3-bisphosphoglycerate-independent phosphoglycerate mutase"/>
    <property type="match status" value="1"/>
</dbReference>
<dbReference type="FunFam" id="3.40.720.10:FF:000001">
    <property type="entry name" value="2,3-bisphosphoglycerate-independent phosphoglycerate mutase"/>
    <property type="match status" value="1"/>
</dbReference>
<dbReference type="Gene3D" id="3.40.720.10">
    <property type="entry name" value="Alkaline Phosphatase, subunit A"/>
    <property type="match status" value="1"/>
</dbReference>
<dbReference type="Gene3D" id="3.40.1450.10">
    <property type="entry name" value="BPG-independent phosphoglycerate mutase, domain B"/>
    <property type="match status" value="1"/>
</dbReference>
<dbReference type="HAMAP" id="MF_01038">
    <property type="entry name" value="GpmI"/>
    <property type="match status" value="1"/>
</dbReference>
<dbReference type="InterPro" id="IPR017850">
    <property type="entry name" value="Alkaline_phosphatase_core_sf"/>
</dbReference>
<dbReference type="InterPro" id="IPR011258">
    <property type="entry name" value="BPG-indep_PGM_N"/>
</dbReference>
<dbReference type="InterPro" id="IPR006124">
    <property type="entry name" value="Metalloenzyme"/>
</dbReference>
<dbReference type="InterPro" id="IPR036646">
    <property type="entry name" value="PGAM_B_sf"/>
</dbReference>
<dbReference type="InterPro" id="IPR005995">
    <property type="entry name" value="Pgm_bpd_ind"/>
</dbReference>
<dbReference type="NCBIfam" id="TIGR01307">
    <property type="entry name" value="pgm_bpd_ind"/>
    <property type="match status" value="1"/>
</dbReference>
<dbReference type="PANTHER" id="PTHR31637">
    <property type="entry name" value="2,3-BISPHOSPHOGLYCERATE-INDEPENDENT PHOSPHOGLYCERATE MUTASE"/>
    <property type="match status" value="1"/>
</dbReference>
<dbReference type="PANTHER" id="PTHR31637:SF0">
    <property type="entry name" value="2,3-BISPHOSPHOGLYCERATE-INDEPENDENT PHOSPHOGLYCERATE MUTASE"/>
    <property type="match status" value="1"/>
</dbReference>
<dbReference type="Pfam" id="PF06415">
    <property type="entry name" value="iPGM_N"/>
    <property type="match status" value="1"/>
</dbReference>
<dbReference type="Pfam" id="PF01676">
    <property type="entry name" value="Metalloenzyme"/>
    <property type="match status" value="1"/>
</dbReference>
<dbReference type="PIRSF" id="PIRSF001492">
    <property type="entry name" value="IPGAM"/>
    <property type="match status" value="1"/>
</dbReference>
<dbReference type="SUPFAM" id="SSF64158">
    <property type="entry name" value="2,3-Bisphosphoglycerate-independent phosphoglycerate mutase, substrate-binding domain"/>
    <property type="match status" value="1"/>
</dbReference>
<dbReference type="SUPFAM" id="SSF53649">
    <property type="entry name" value="Alkaline phosphatase-like"/>
    <property type="match status" value="1"/>
</dbReference>
<keyword id="KW-0324">Glycolysis</keyword>
<keyword id="KW-0413">Isomerase</keyword>
<keyword id="KW-0464">Manganese</keyword>
<keyword id="KW-0479">Metal-binding</keyword>
<keyword id="KW-1185">Reference proteome</keyword>
<gene>
    <name evidence="1" type="primary">gpmI</name>
    <name type="synonym">pgm-i</name>
    <name type="ordered locus">CA_C0712</name>
</gene>
<comment type="function">
    <text evidence="1">Catalyzes the interconversion of 2-phosphoglycerate and 3-phosphoglycerate.</text>
</comment>
<comment type="catalytic activity">
    <reaction evidence="1">
        <text>(2R)-2-phosphoglycerate = (2R)-3-phosphoglycerate</text>
        <dbReference type="Rhea" id="RHEA:15901"/>
        <dbReference type="ChEBI" id="CHEBI:58272"/>
        <dbReference type="ChEBI" id="CHEBI:58289"/>
        <dbReference type="EC" id="5.4.2.12"/>
    </reaction>
</comment>
<comment type="cofactor">
    <cofactor evidence="1">
        <name>Mn(2+)</name>
        <dbReference type="ChEBI" id="CHEBI:29035"/>
    </cofactor>
    <text evidence="1">Binds 2 manganese ions per subunit.</text>
</comment>
<comment type="pathway">
    <text evidence="1">Carbohydrate degradation; glycolysis; pyruvate from D-glyceraldehyde 3-phosphate: step 3/5.</text>
</comment>
<comment type="subunit">
    <text evidence="1">Monomer.</text>
</comment>
<comment type="similarity">
    <text evidence="1">Belongs to the BPG-independent phosphoglycerate mutase family.</text>
</comment>
<name>GPMI_CLOAB</name>
<organism>
    <name type="scientific">Clostridium acetobutylicum (strain ATCC 824 / DSM 792 / JCM 1419 / IAM 19013 / LMG 5710 / NBRC 13948 / NRRL B-527 / VKM B-1787 / 2291 / W)</name>
    <dbReference type="NCBI Taxonomy" id="272562"/>
    <lineage>
        <taxon>Bacteria</taxon>
        <taxon>Bacillati</taxon>
        <taxon>Bacillota</taxon>
        <taxon>Clostridia</taxon>
        <taxon>Eubacteriales</taxon>
        <taxon>Clostridiaceae</taxon>
        <taxon>Clostridium</taxon>
    </lineage>
</organism>
<reference key="1">
    <citation type="journal article" date="2001" name="J. Bacteriol.">
        <title>Genome sequence and comparative analysis of the solvent-producing bacterium Clostridium acetobutylicum.</title>
        <authorList>
            <person name="Noelling J."/>
            <person name="Breton G."/>
            <person name="Omelchenko M.V."/>
            <person name="Makarova K.S."/>
            <person name="Zeng Q."/>
            <person name="Gibson R."/>
            <person name="Lee H.M."/>
            <person name="Dubois J."/>
            <person name="Qiu D."/>
            <person name="Hitti J."/>
            <person name="Wolf Y.I."/>
            <person name="Tatusov R.L."/>
            <person name="Sabathe F."/>
            <person name="Doucette-Stamm L.A."/>
            <person name="Soucaille P."/>
            <person name="Daly M.J."/>
            <person name="Bennett G.N."/>
            <person name="Koonin E.V."/>
            <person name="Smith D.R."/>
        </authorList>
    </citation>
    <scope>NUCLEOTIDE SEQUENCE [LARGE SCALE GENOMIC DNA]</scope>
    <source>
        <strain>ATCC 824 / DSM 792 / JCM 1419 / IAM 19013 / LMG 5710 / NBRC 13948 / NRRL B-527 / VKM B-1787 / 2291 / W</strain>
    </source>
</reference>
<reference key="2">
    <citation type="journal article" date="1999" name="Microbiology">
        <title>The glyceraldehyde-3-phosphate dehydrogenase of Clostridium acetobutylicum: isolation and purification of the enzyme, and sequencing and localization of the gap gene within a cluster of other glycolytic genes.</title>
        <authorList>
            <person name="Schreiber W."/>
            <person name="Durre P."/>
        </authorList>
    </citation>
    <scope>NUCLEOTIDE SEQUENCE [GENOMIC DNA] OF 1-365</scope>
    <source>
        <strain>ATCC 824 / DSM 792 / JCM 1419 / IAM 19013 / LMG 5710 / NBRC 13948 / NRRL B-527 / VKM B-1787 / 2291 / W</strain>
    </source>
</reference>
<evidence type="ECO:0000255" key="1">
    <source>
        <dbReference type="HAMAP-Rule" id="MF_01038"/>
    </source>
</evidence>
<protein>
    <recommendedName>
        <fullName evidence="1">2,3-bisphosphoglycerate-independent phosphoglycerate mutase</fullName>
        <shortName evidence="1">BPG-independent PGAM</shortName>
        <shortName evidence="1">Phosphoglyceromutase</shortName>
        <shortName evidence="1">iPGM</shortName>
        <ecNumber evidence="1">5.4.2.12</ecNumber>
    </recommendedName>
</protein>
<proteinExistence type="inferred from homology"/>
<feature type="chain" id="PRO_0000212136" description="2,3-bisphosphoglycerate-independent phosphoglycerate mutase">
    <location>
        <begin position="1"/>
        <end position="510"/>
    </location>
</feature>
<feature type="active site" description="Phosphoserine intermediate" evidence="1">
    <location>
        <position position="62"/>
    </location>
</feature>
<feature type="binding site" evidence="1">
    <location>
        <position position="12"/>
    </location>
    <ligand>
        <name>Mn(2+)</name>
        <dbReference type="ChEBI" id="CHEBI:29035"/>
        <label>2</label>
    </ligand>
</feature>
<feature type="binding site" evidence="1">
    <location>
        <position position="62"/>
    </location>
    <ligand>
        <name>Mn(2+)</name>
        <dbReference type="ChEBI" id="CHEBI:29035"/>
        <label>2</label>
    </ligand>
</feature>
<feature type="binding site" evidence="1">
    <location>
        <position position="123"/>
    </location>
    <ligand>
        <name>substrate</name>
    </ligand>
</feature>
<feature type="binding site" evidence="1">
    <location>
        <begin position="153"/>
        <end position="154"/>
    </location>
    <ligand>
        <name>substrate</name>
    </ligand>
</feature>
<feature type="binding site" evidence="1">
    <location>
        <position position="185"/>
    </location>
    <ligand>
        <name>substrate</name>
    </ligand>
</feature>
<feature type="binding site" evidence="1">
    <location>
        <position position="191"/>
    </location>
    <ligand>
        <name>substrate</name>
    </ligand>
</feature>
<feature type="binding site" evidence="1">
    <location>
        <begin position="260"/>
        <end position="263"/>
    </location>
    <ligand>
        <name>substrate</name>
    </ligand>
</feature>
<feature type="binding site" evidence="1">
    <location>
        <position position="333"/>
    </location>
    <ligand>
        <name>substrate</name>
    </ligand>
</feature>
<feature type="binding site" evidence="1">
    <location>
        <position position="400"/>
    </location>
    <ligand>
        <name>Mn(2+)</name>
        <dbReference type="ChEBI" id="CHEBI:29035"/>
        <label>1</label>
    </ligand>
</feature>
<feature type="binding site" evidence="1">
    <location>
        <position position="404"/>
    </location>
    <ligand>
        <name>Mn(2+)</name>
        <dbReference type="ChEBI" id="CHEBI:29035"/>
        <label>1</label>
    </ligand>
</feature>
<feature type="binding site" evidence="1">
    <location>
        <position position="441"/>
    </location>
    <ligand>
        <name>Mn(2+)</name>
        <dbReference type="ChEBI" id="CHEBI:29035"/>
        <label>2</label>
    </ligand>
</feature>
<feature type="binding site" evidence="1">
    <location>
        <position position="442"/>
    </location>
    <ligand>
        <name>Mn(2+)</name>
        <dbReference type="ChEBI" id="CHEBI:29035"/>
        <label>2</label>
    </ligand>
</feature>
<feature type="binding site" evidence="1">
    <location>
        <position position="460"/>
    </location>
    <ligand>
        <name>Mn(2+)</name>
        <dbReference type="ChEBI" id="CHEBI:29035"/>
        <label>1</label>
    </ligand>
</feature>
<accession>Q97L53</accession>
<accession>O52634</accession>